<proteinExistence type="inferred from homology"/>
<sequence length="339" mass="36818">MIKVAINGYGTIGKRVADAVSAQKDMEIIGVSKTKPSAEALIAVQRGYPIYIADMSKKDAFAKAGIPVAGSVEDMLKKADIVVDGTPGGVGESNKALYEKAGVKAIWQGGEDHEVAGFSFNAHANYKDAIGRQFVRVVSCNTTGLCRVIKAVDDAFGVVKVRAVMVRRGADPHVVKKGPIDAVVLDPPTIPSHHGPDVNTVLPHIDIVTMAMIVPTTQMHMHAITIELKKEVSRDDVLAVMRSHNRIGLVQPKTAIKSTAELKEYVMDMGRPRSDLWENGIFEASVNMVGKELFFFQAIHQEADVVIENVDAIRAMMGEVRDPETSIRMTNEAMQFTAL</sequence>
<keyword id="KW-0963">Cytoplasm</keyword>
<keyword id="KW-0324">Glycolysis</keyword>
<keyword id="KW-0520">NAD</keyword>
<keyword id="KW-0521">NADP</keyword>
<keyword id="KW-0560">Oxidoreductase</keyword>
<keyword id="KW-1185">Reference proteome</keyword>
<gene>
    <name evidence="1" type="primary">gap</name>
    <name type="ordered locus">Mhun_2462</name>
</gene>
<organism>
    <name type="scientific">Methanospirillum hungatei JF-1 (strain ATCC 27890 / DSM 864 / NBRC 100397 / JF-1)</name>
    <dbReference type="NCBI Taxonomy" id="323259"/>
    <lineage>
        <taxon>Archaea</taxon>
        <taxon>Methanobacteriati</taxon>
        <taxon>Methanobacteriota</taxon>
        <taxon>Stenosarchaea group</taxon>
        <taxon>Methanomicrobia</taxon>
        <taxon>Methanomicrobiales</taxon>
        <taxon>Methanospirillaceae</taxon>
        <taxon>Methanospirillum</taxon>
    </lineage>
</organism>
<dbReference type="EC" id="1.2.1.59" evidence="1"/>
<dbReference type="EMBL" id="CP000254">
    <property type="protein sequence ID" value="ABD42162.1"/>
    <property type="molecule type" value="Genomic_DNA"/>
</dbReference>
<dbReference type="RefSeq" id="WP_011449420.1">
    <property type="nucleotide sequence ID" value="NC_007796.1"/>
</dbReference>
<dbReference type="SMR" id="Q2FNA2"/>
<dbReference type="FunCoup" id="Q2FNA2">
    <property type="interactions" value="152"/>
</dbReference>
<dbReference type="STRING" id="323259.Mhun_2462"/>
<dbReference type="EnsemblBacteria" id="ABD42162">
    <property type="protein sequence ID" value="ABD42162"/>
    <property type="gene ID" value="Mhun_2462"/>
</dbReference>
<dbReference type="GeneID" id="3923967"/>
<dbReference type="KEGG" id="mhu:Mhun_2462"/>
<dbReference type="eggNOG" id="arCOG00493">
    <property type="taxonomic scope" value="Archaea"/>
</dbReference>
<dbReference type="HOGENOM" id="CLU_069533_0_0_2"/>
<dbReference type="InParanoid" id="Q2FNA2"/>
<dbReference type="OrthoDB" id="295712at2157"/>
<dbReference type="UniPathway" id="UPA00109">
    <property type="reaction ID" value="UER00184"/>
</dbReference>
<dbReference type="Proteomes" id="UP000001941">
    <property type="component" value="Chromosome"/>
</dbReference>
<dbReference type="GO" id="GO:0005737">
    <property type="term" value="C:cytoplasm"/>
    <property type="evidence" value="ECO:0007669"/>
    <property type="project" value="UniProtKB-SubCell"/>
</dbReference>
<dbReference type="GO" id="GO:0008839">
    <property type="term" value="F:4-hydroxy-tetrahydrodipicolinate reductase"/>
    <property type="evidence" value="ECO:0007669"/>
    <property type="project" value="InterPro"/>
</dbReference>
<dbReference type="GO" id="GO:0004365">
    <property type="term" value="F:glyceraldehyde-3-phosphate dehydrogenase (NAD+) (phosphorylating) activity"/>
    <property type="evidence" value="ECO:0007669"/>
    <property type="project" value="UniProtKB-UniRule"/>
</dbReference>
<dbReference type="GO" id="GO:0047100">
    <property type="term" value="F:glyceraldehyde-3-phosphate dehydrogenase (NADP+) (phosphorylating) activity"/>
    <property type="evidence" value="ECO:0007669"/>
    <property type="project" value="RHEA"/>
</dbReference>
<dbReference type="GO" id="GO:0051287">
    <property type="term" value="F:NAD binding"/>
    <property type="evidence" value="ECO:0007669"/>
    <property type="project" value="InterPro"/>
</dbReference>
<dbReference type="GO" id="GO:0050661">
    <property type="term" value="F:NADP binding"/>
    <property type="evidence" value="ECO:0007669"/>
    <property type="project" value="InterPro"/>
</dbReference>
<dbReference type="GO" id="GO:0006096">
    <property type="term" value="P:glycolytic process"/>
    <property type="evidence" value="ECO:0007669"/>
    <property type="project" value="UniProtKB-UniRule"/>
</dbReference>
<dbReference type="GO" id="GO:0009089">
    <property type="term" value="P:lysine biosynthetic process via diaminopimelate"/>
    <property type="evidence" value="ECO:0007669"/>
    <property type="project" value="InterPro"/>
</dbReference>
<dbReference type="CDD" id="cd18127">
    <property type="entry name" value="GAPDH_II_C"/>
    <property type="match status" value="1"/>
</dbReference>
<dbReference type="CDD" id="cd02278">
    <property type="entry name" value="GAPDH_II_N"/>
    <property type="match status" value="1"/>
</dbReference>
<dbReference type="Gene3D" id="3.30.360.10">
    <property type="entry name" value="Dihydrodipicolinate Reductase, domain 2"/>
    <property type="match status" value="1"/>
</dbReference>
<dbReference type="Gene3D" id="3.40.50.720">
    <property type="entry name" value="NAD(P)-binding Rossmann-like Domain"/>
    <property type="match status" value="1"/>
</dbReference>
<dbReference type="HAMAP" id="MF_00559">
    <property type="entry name" value="G3P_dehdrog_arch"/>
    <property type="match status" value="1"/>
</dbReference>
<dbReference type="InterPro" id="IPR000846">
    <property type="entry name" value="DapB_N"/>
</dbReference>
<dbReference type="InterPro" id="IPR020831">
    <property type="entry name" value="GlycerAld/Erythrose_P_DH"/>
</dbReference>
<dbReference type="InterPro" id="IPR020830">
    <property type="entry name" value="GlycerAld_3-P_DH_AS"/>
</dbReference>
<dbReference type="InterPro" id="IPR020829">
    <property type="entry name" value="GlycerAld_3-P_DH_cat"/>
</dbReference>
<dbReference type="InterPro" id="IPR020828">
    <property type="entry name" value="GlycerAld_3-P_DH_NAD(P)-bd"/>
</dbReference>
<dbReference type="InterPro" id="IPR006436">
    <property type="entry name" value="Glyceraldehyde-3-P_DH_2_arc"/>
</dbReference>
<dbReference type="InterPro" id="IPR036291">
    <property type="entry name" value="NAD(P)-bd_dom_sf"/>
</dbReference>
<dbReference type="NCBIfam" id="TIGR01546">
    <property type="entry name" value="GAPDH-II_archae"/>
    <property type="match status" value="1"/>
</dbReference>
<dbReference type="NCBIfam" id="NF003251">
    <property type="entry name" value="PRK04207.1"/>
    <property type="match status" value="1"/>
</dbReference>
<dbReference type="Pfam" id="PF01113">
    <property type="entry name" value="DapB_N"/>
    <property type="match status" value="1"/>
</dbReference>
<dbReference type="Pfam" id="PF02800">
    <property type="entry name" value="Gp_dh_C"/>
    <property type="match status" value="1"/>
</dbReference>
<dbReference type="PIRSF" id="PIRSF000149">
    <property type="entry name" value="GAP_DH"/>
    <property type="match status" value="1"/>
</dbReference>
<dbReference type="SMART" id="SM00846">
    <property type="entry name" value="Gp_dh_N"/>
    <property type="match status" value="1"/>
</dbReference>
<dbReference type="SUPFAM" id="SSF55347">
    <property type="entry name" value="Glyceraldehyde-3-phosphate dehydrogenase-like, C-terminal domain"/>
    <property type="match status" value="1"/>
</dbReference>
<dbReference type="SUPFAM" id="SSF51735">
    <property type="entry name" value="NAD(P)-binding Rossmann-fold domains"/>
    <property type="match status" value="1"/>
</dbReference>
<dbReference type="PROSITE" id="PS00071">
    <property type="entry name" value="GAPDH"/>
    <property type="match status" value="1"/>
</dbReference>
<comment type="catalytic activity">
    <reaction evidence="1">
        <text>D-glyceraldehyde 3-phosphate + phosphate + NADP(+) = (2R)-3-phospho-glyceroyl phosphate + NADPH + H(+)</text>
        <dbReference type="Rhea" id="RHEA:10296"/>
        <dbReference type="ChEBI" id="CHEBI:15378"/>
        <dbReference type="ChEBI" id="CHEBI:43474"/>
        <dbReference type="ChEBI" id="CHEBI:57604"/>
        <dbReference type="ChEBI" id="CHEBI:57783"/>
        <dbReference type="ChEBI" id="CHEBI:58349"/>
        <dbReference type="ChEBI" id="CHEBI:59776"/>
        <dbReference type="EC" id="1.2.1.59"/>
    </reaction>
</comment>
<comment type="catalytic activity">
    <reaction evidence="1">
        <text>D-glyceraldehyde 3-phosphate + phosphate + NAD(+) = (2R)-3-phospho-glyceroyl phosphate + NADH + H(+)</text>
        <dbReference type="Rhea" id="RHEA:10300"/>
        <dbReference type="ChEBI" id="CHEBI:15378"/>
        <dbReference type="ChEBI" id="CHEBI:43474"/>
        <dbReference type="ChEBI" id="CHEBI:57540"/>
        <dbReference type="ChEBI" id="CHEBI:57604"/>
        <dbReference type="ChEBI" id="CHEBI:57945"/>
        <dbReference type="ChEBI" id="CHEBI:59776"/>
        <dbReference type="EC" id="1.2.1.59"/>
    </reaction>
</comment>
<comment type="pathway">
    <text evidence="1">Carbohydrate degradation; glycolysis; pyruvate from D-glyceraldehyde 3-phosphate: step 1/5.</text>
</comment>
<comment type="subunit">
    <text evidence="1">Homotetramer.</text>
</comment>
<comment type="subcellular location">
    <subcellularLocation>
        <location evidence="1">Cytoplasm</location>
    </subcellularLocation>
</comment>
<comment type="similarity">
    <text evidence="1">Belongs to the glyceraldehyde-3-phosphate dehydrogenase family.</text>
</comment>
<protein>
    <recommendedName>
        <fullName evidence="1">Glyceraldehyde-3-phosphate dehydrogenase</fullName>
        <shortName evidence="1">GAPDH</shortName>
        <ecNumber evidence="1">1.2.1.59</ecNumber>
    </recommendedName>
    <alternativeName>
        <fullName evidence="1">NAD(P)-dependent glyceraldehyde-3-phosphate dehydrogenase</fullName>
    </alternativeName>
</protein>
<evidence type="ECO:0000255" key="1">
    <source>
        <dbReference type="HAMAP-Rule" id="MF_00559"/>
    </source>
</evidence>
<accession>Q2FNA2</accession>
<name>G3P_METHJ</name>
<feature type="chain" id="PRO_0000300974" description="Glyceraldehyde-3-phosphate dehydrogenase">
    <location>
        <begin position="1"/>
        <end position="339"/>
    </location>
</feature>
<feature type="active site" description="Nucleophile" evidence="1">
    <location>
        <position position="140"/>
    </location>
</feature>
<feature type="binding site" evidence="1">
    <location>
        <begin position="11"/>
        <end position="12"/>
    </location>
    <ligand>
        <name>NAD(+)</name>
        <dbReference type="ChEBI" id="CHEBI:57540"/>
    </ligand>
</feature>
<feature type="binding site" evidence="1">
    <location>
        <position position="110"/>
    </location>
    <ligand>
        <name>NAD(+)</name>
        <dbReference type="ChEBI" id="CHEBI:57540"/>
    </ligand>
</feature>
<feature type="binding site" evidence="1">
    <location>
        <begin position="139"/>
        <end position="141"/>
    </location>
    <ligand>
        <name>D-glyceraldehyde 3-phosphate</name>
        <dbReference type="ChEBI" id="CHEBI:59776"/>
    </ligand>
</feature>
<feature type="binding site" evidence="1">
    <location>
        <position position="168"/>
    </location>
    <ligand>
        <name>NAD(+)</name>
        <dbReference type="ChEBI" id="CHEBI:57540"/>
    </ligand>
</feature>
<feature type="binding site" evidence="1">
    <location>
        <begin position="194"/>
        <end position="195"/>
    </location>
    <ligand>
        <name>D-glyceraldehyde 3-phosphate</name>
        <dbReference type="ChEBI" id="CHEBI:59776"/>
    </ligand>
</feature>
<feature type="binding site" evidence="1">
    <location>
        <position position="301"/>
    </location>
    <ligand>
        <name>NAD(+)</name>
        <dbReference type="ChEBI" id="CHEBI:57540"/>
    </ligand>
</feature>
<reference key="1">
    <citation type="journal article" date="2016" name="Stand. Genomic Sci.">
        <title>Complete genome sequence of Methanospirillum hungatei type strain JF1.</title>
        <authorList>
            <person name="Gunsalus R.P."/>
            <person name="Cook L.E."/>
            <person name="Crable B."/>
            <person name="Rohlin L."/>
            <person name="McDonald E."/>
            <person name="Mouttaki H."/>
            <person name="Sieber J.R."/>
            <person name="Poweleit N."/>
            <person name="Zhou H."/>
            <person name="Lapidus A.L."/>
            <person name="Daligault H.E."/>
            <person name="Land M."/>
            <person name="Gilna P."/>
            <person name="Ivanova N."/>
            <person name="Kyrpides N."/>
            <person name="Culley D.E."/>
            <person name="McInerney M.J."/>
        </authorList>
    </citation>
    <scope>NUCLEOTIDE SEQUENCE [LARGE SCALE GENOMIC DNA]</scope>
    <source>
        <strain>ATCC 27890 / DSM 864 / NBRC 100397 / JF-1</strain>
    </source>
</reference>